<comment type="function">
    <text evidence="1">Reversibly transfers an adenylyl group from ATP to 4'-phosphopantetheine, yielding dephospho-CoA (dPCoA) and pyrophosphate.</text>
</comment>
<comment type="catalytic activity">
    <reaction evidence="1">
        <text>(R)-4'-phosphopantetheine + ATP + H(+) = 3'-dephospho-CoA + diphosphate</text>
        <dbReference type="Rhea" id="RHEA:19801"/>
        <dbReference type="ChEBI" id="CHEBI:15378"/>
        <dbReference type="ChEBI" id="CHEBI:30616"/>
        <dbReference type="ChEBI" id="CHEBI:33019"/>
        <dbReference type="ChEBI" id="CHEBI:57328"/>
        <dbReference type="ChEBI" id="CHEBI:61723"/>
        <dbReference type="EC" id="2.7.7.3"/>
    </reaction>
</comment>
<comment type="cofactor">
    <cofactor evidence="1">
        <name>Mg(2+)</name>
        <dbReference type="ChEBI" id="CHEBI:18420"/>
    </cofactor>
</comment>
<comment type="pathway">
    <text evidence="1">Cofactor biosynthesis; coenzyme A biosynthesis; CoA from (R)-pantothenate: step 4/5.</text>
</comment>
<comment type="subunit">
    <text evidence="1">Homohexamer.</text>
</comment>
<comment type="subcellular location">
    <subcellularLocation>
        <location evidence="1">Cytoplasm</location>
    </subcellularLocation>
</comment>
<comment type="similarity">
    <text evidence="1">Belongs to the bacterial CoaD family.</text>
</comment>
<sequence>MKSIAVYPGSFDPFTNGHLDIIRRAHPLFEEIIIAVAINSKKTSLFSPEERVEMIGKVFHGWDKIKIDTFEGLTVDYCKEKNSRVILRGLRAVTDFDYEYAISLMNKKLAPEIETYFLMADNEYSFVSSTIVKEVARHGRAVSNQVPDVVGEALVKKFSV</sequence>
<name>COAD_LEPBA</name>
<accession>B0S9J5</accession>
<dbReference type="EC" id="2.7.7.3" evidence="1"/>
<dbReference type="EMBL" id="CP000777">
    <property type="protein sequence ID" value="ABZ92632.1"/>
    <property type="molecule type" value="Genomic_DNA"/>
</dbReference>
<dbReference type="RefSeq" id="WP_012387123.1">
    <property type="nucleotide sequence ID" value="NC_010842.1"/>
</dbReference>
<dbReference type="SMR" id="B0S9J5"/>
<dbReference type="KEGG" id="lbf:LBF_0086"/>
<dbReference type="HOGENOM" id="CLU_100149_0_1_12"/>
<dbReference type="UniPathway" id="UPA00241">
    <property type="reaction ID" value="UER00355"/>
</dbReference>
<dbReference type="GO" id="GO:0005737">
    <property type="term" value="C:cytoplasm"/>
    <property type="evidence" value="ECO:0007669"/>
    <property type="project" value="UniProtKB-SubCell"/>
</dbReference>
<dbReference type="GO" id="GO:0005524">
    <property type="term" value="F:ATP binding"/>
    <property type="evidence" value="ECO:0007669"/>
    <property type="project" value="UniProtKB-KW"/>
</dbReference>
<dbReference type="GO" id="GO:0004595">
    <property type="term" value="F:pantetheine-phosphate adenylyltransferase activity"/>
    <property type="evidence" value="ECO:0007669"/>
    <property type="project" value="UniProtKB-UniRule"/>
</dbReference>
<dbReference type="GO" id="GO:0015937">
    <property type="term" value="P:coenzyme A biosynthetic process"/>
    <property type="evidence" value="ECO:0007669"/>
    <property type="project" value="UniProtKB-UniRule"/>
</dbReference>
<dbReference type="CDD" id="cd02163">
    <property type="entry name" value="PPAT"/>
    <property type="match status" value="1"/>
</dbReference>
<dbReference type="Gene3D" id="3.40.50.620">
    <property type="entry name" value="HUPs"/>
    <property type="match status" value="1"/>
</dbReference>
<dbReference type="HAMAP" id="MF_00151">
    <property type="entry name" value="PPAT_bact"/>
    <property type="match status" value="1"/>
</dbReference>
<dbReference type="InterPro" id="IPR004821">
    <property type="entry name" value="Cyt_trans-like"/>
</dbReference>
<dbReference type="InterPro" id="IPR001980">
    <property type="entry name" value="PPAT"/>
</dbReference>
<dbReference type="InterPro" id="IPR014729">
    <property type="entry name" value="Rossmann-like_a/b/a_fold"/>
</dbReference>
<dbReference type="NCBIfam" id="TIGR01510">
    <property type="entry name" value="coaD_prev_kdtB"/>
    <property type="match status" value="1"/>
</dbReference>
<dbReference type="NCBIfam" id="TIGR00125">
    <property type="entry name" value="cyt_tran_rel"/>
    <property type="match status" value="1"/>
</dbReference>
<dbReference type="PANTHER" id="PTHR21342">
    <property type="entry name" value="PHOSPHOPANTETHEINE ADENYLYLTRANSFERASE"/>
    <property type="match status" value="1"/>
</dbReference>
<dbReference type="PANTHER" id="PTHR21342:SF1">
    <property type="entry name" value="PHOSPHOPANTETHEINE ADENYLYLTRANSFERASE"/>
    <property type="match status" value="1"/>
</dbReference>
<dbReference type="Pfam" id="PF01467">
    <property type="entry name" value="CTP_transf_like"/>
    <property type="match status" value="1"/>
</dbReference>
<dbReference type="PRINTS" id="PR01020">
    <property type="entry name" value="LPSBIOSNTHSS"/>
</dbReference>
<dbReference type="SUPFAM" id="SSF52374">
    <property type="entry name" value="Nucleotidylyl transferase"/>
    <property type="match status" value="1"/>
</dbReference>
<reference key="1">
    <citation type="journal article" date="2008" name="PLoS ONE">
        <title>Genome sequence of the saprophyte Leptospira biflexa provides insights into the evolution of Leptospira and the pathogenesis of leptospirosis.</title>
        <authorList>
            <person name="Picardeau M."/>
            <person name="Bulach D.M."/>
            <person name="Bouchier C."/>
            <person name="Zuerner R.L."/>
            <person name="Zidane N."/>
            <person name="Wilson P.J."/>
            <person name="Creno S."/>
            <person name="Kuczek E.S."/>
            <person name="Bommezzadri S."/>
            <person name="Davis J.C."/>
            <person name="McGrath A."/>
            <person name="Johnson M.J."/>
            <person name="Boursaux-Eude C."/>
            <person name="Seemann T."/>
            <person name="Rouy Z."/>
            <person name="Coppel R.L."/>
            <person name="Rood J.I."/>
            <person name="Lajus A."/>
            <person name="Davies J.K."/>
            <person name="Medigue C."/>
            <person name="Adler B."/>
        </authorList>
    </citation>
    <scope>NUCLEOTIDE SEQUENCE [LARGE SCALE GENOMIC DNA]</scope>
    <source>
        <strain>Patoc 1 / Ames</strain>
    </source>
</reference>
<gene>
    <name evidence="1" type="primary">coaD</name>
    <name type="ordered locus">LBF_0086</name>
</gene>
<evidence type="ECO:0000255" key="1">
    <source>
        <dbReference type="HAMAP-Rule" id="MF_00151"/>
    </source>
</evidence>
<feature type="chain" id="PRO_1000096809" description="Phosphopantetheine adenylyltransferase">
    <location>
        <begin position="1"/>
        <end position="160"/>
    </location>
</feature>
<feature type="binding site" evidence="1">
    <location>
        <begin position="10"/>
        <end position="11"/>
    </location>
    <ligand>
        <name>ATP</name>
        <dbReference type="ChEBI" id="CHEBI:30616"/>
    </ligand>
</feature>
<feature type="binding site" evidence="1">
    <location>
        <position position="10"/>
    </location>
    <ligand>
        <name>substrate</name>
    </ligand>
</feature>
<feature type="binding site" evidence="1">
    <location>
        <position position="18"/>
    </location>
    <ligand>
        <name>ATP</name>
        <dbReference type="ChEBI" id="CHEBI:30616"/>
    </ligand>
</feature>
<feature type="binding site" evidence="1">
    <location>
        <position position="42"/>
    </location>
    <ligand>
        <name>substrate</name>
    </ligand>
</feature>
<feature type="binding site" evidence="1">
    <location>
        <position position="74"/>
    </location>
    <ligand>
        <name>substrate</name>
    </ligand>
</feature>
<feature type="binding site" evidence="1">
    <location>
        <position position="88"/>
    </location>
    <ligand>
        <name>substrate</name>
    </ligand>
</feature>
<feature type="binding site" evidence="1">
    <location>
        <begin position="89"/>
        <end position="91"/>
    </location>
    <ligand>
        <name>ATP</name>
        <dbReference type="ChEBI" id="CHEBI:30616"/>
    </ligand>
</feature>
<feature type="binding site" evidence="1">
    <location>
        <position position="99"/>
    </location>
    <ligand>
        <name>ATP</name>
        <dbReference type="ChEBI" id="CHEBI:30616"/>
    </ligand>
</feature>
<feature type="binding site" evidence="1">
    <location>
        <begin position="124"/>
        <end position="130"/>
    </location>
    <ligand>
        <name>ATP</name>
        <dbReference type="ChEBI" id="CHEBI:30616"/>
    </ligand>
</feature>
<feature type="site" description="Transition state stabilizer" evidence="1">
    <location>
        <position position="18"/>
    </location>
</feature>
<proteinExistence type="inferred from homology"/>
<protein>
    <recommendedName>
        <fullName evidence="1">Phosphopantetheine adenylyltransferase</fullName>
        <ecNumber evidence="1">2.7.7.3</ecNumber>
    </recommendedName>
    <alternativeName>
        <fullName evidence="1">Dephospho-CoA pyrophosphorylase</fullName>
    </alternativeName>
    <alternativeName>
        <fullName evidence="1">Pantetheine-phosphate adenylyltransferase</fullName>
        <shortName evidence="1">PPAT</shortName>
    </alternativeName>
</protein>
<keyword id="KW-0067">ATP-binding</keyword>
<keyword id="KW-0173">Coenzyme A biosynthesis</keyword>
<keyword id="KW-0963">Cytoplasm</keyword>
<keyword id="KW-0460">Magnesium</keyword>
<keyword id="KW-0547">Nucleotide-binding</keyword>
<keyword id="KW-0548">Nucleotidyltransferase</keyword>
<keyword id="KW-0808">Transferase</keyword>
<organism>
    <name type="scientific">Leptospira biflexa serovar Patoc (strain Patoc 1 / Ames)</name>
    <dbReference type="NCBI Taxonomy" id="355278"/>
    <lineage>
        <taxon>Bacteria</taxon>
        <taxon>Pseudomonadati</taxon>
        <taxon>Spirochaetota</taxon>
        <taxon>Spirochaetia</taxon>
        <taxon>Leptospirales</taxon>
        <taxon>Leptospiraceae</taxon>
        <taxon>Leptospira</taxon>
    </lineage>
</organism>